<feature type="chain" id="PRO_0000257934" description="Cytochrome b">
    <location>
        <begin position="1"/>
        <end position="382"/>
    </location>
</feature>
<feature type="transmembrane region" description="Helical" evidence="2">
    <location>
        <begin position="33"/>
        <end position="53"/>
    </location>
</feature>
<feature type="transmembrane region" description="Helical" evidence="2">
    <location>
        <begin position="77"/>
        <end position="98"/>
    </location>
</feature>
<feature type="transmembrane region" description="Helical" evidence="2">
    <location>
        <begin position="113"/>
        <end position="133"/>
    </location>
</feature>
<feature type="transmembrane region" description="Helical" evidence="2">
    <location>
        <begin position="178"/>
        <end position="198"/>
    </location>
</feature>
<feature type="transmembrane region" description="Helical" evidence="2">
    <location>
        <begin position="226"/>
        <end position="246"/>
    </location>
</feature>
<feature type="transmembrane region" description="Helical" evidence="2">
    <location>
        <begin position="288"/>
        <end position="308"/>
    </location>
</feature>
<feature type="transmembrane region" description="Helical" evidence="2">
    <location>
        <begin position="320"/>
        <end position="340"/>
    </location>
</feature>
<feature type="transmembrane region" description="Helical" evidence="2">
    <location>
        <begin position="347"/>
        <end position="367"/>
    </location>
</feature>
<feature type="binding site" description="axial binding residue" evidence="2">
    <location>
        <position position="83"/>
    </location>
    <ligand>
        <name>heme b</name>
        <dbReference type="ChEBI" id="CHEBI:60344"/>
        <label>b562</label>
    </ligand>
    <ligandPart>
        <name>Fe</name>
        <dbReference type="ChEBI" id="CHEBI:18248"/>
    </ligandPart>
</feature>
<feature type="binding site" description="axial binding residue" evidence="2">
    <location>
        <position position="97"/>
    </location>
    <ligand>
        <name>heme b</name>
        <dbReference type="ChEBI" id="CHEBI:60344"/>
        <label>b566</label>
    </ligand>
    <ligandPart>
        <name>Fe</name>
        <dbReference type="ChEBI" id="CHEBI:18248"/>
    </ligandPart>
</feature>
<feature type="binding site" description="axial binding residue" evidence="2">
    <location>
        <position position="182"/>
    </location>
    <ligand>
        <name>heme b</name>
        <dbReference type="ChEBI" id="CHEBI:60344"/>
        <label>b562</label>
    </ligand>
    <ligandPart>
        <name>Fe</name>
        <dbReference type="ChEBI" id="CHEBI:18248"/>
    </ligandPart>
</feature>
<feature type="binding site" description="axial binding residue" evidence="2">
    <location>
        <position position="196"/>
    </location>
    <ligand>
        <name>heme b</name>
        <dbReference type="ChEBI" id="CHEBI:60344"/>
        <label>b566</label>
    </ligand>
    <ligandPart>
        <name>Fe</name>
        <dbReference type="ChEBI" id="CHEBI:18248"/>
    </ligandPart>
</feature>
<feature type="binding site" evidence="2">
    <location>
        <position position="201"/>
    </location>
    <ligand>
        <name>a ubiquinone</name>
        <dbReference type="ChEBI" id="CHEBI:16389"/>
    </ligand>
</feature>
<organism>
    <name type="scientific">Philander opossum</name>
    <name type="common">Gray four-eyed opossum</name>
    <dbReference type="NCBI Taxonomy" id="9272"/>
    <lineage>
        <taxon>Eukaryota</taxon>
        <taxon>Metazoa</taxon>
        <taxon>Chordata</taxon>
        <taxon>Craniata</taxon>
        <taxon>Vertebrata</taxon>
        <taxon>Euteleostomi</taxon>
        <taxon>Mammalia</taxon>
        <taxon>Metatheria</taxon>
        <taxon>Didelphimorphia</taxon>
        <taxon>Didelphidae</taxon>
        <taxon>Philander</taxon>
    </lineage>
</organism>
<accession>Q35558</accession>
<name>CYB_PHIOP</name>
<sequence length="382" mass="43193">MTNLRKTHPLMKIINDSFIDLPMPSNISAWWNFGSLLGMCLIIQILTGLFLAMHYTSDTLTAFSSVAHICRDVNYGWLIRNIHANGASMFFMCLFLHVGRGIYYGSYLYKETWNIGVILLLTVMATAFVGYVLPWGQMSFWGATVITNLLSAIPYIGNTLVEWIWGGFSVDKATLTRFFAFHFILPFIILAMVVVHLLFLHETGSSNPTGLNPDSDKIPFHPYYTIKDILGLFLMIIILLLLAMFSPDLLGDPDNFTPANPLNTPPHIKPEWYFLFAYAILRSIPNKLGGVLALLMSILVLLIIPLLHTSTQRSMAFRPISQTLFWMLTANLIILTWIGGQPVEQPYIIIGQWASISYFTIIIILMPLAGMLENYMLKPKFP</sequence>
<dbReference type="EMBL" id="U34678">
    <property type="protein sequence ID" value="AAA99761.1"/>
    <property type="molecule type" value="Genomic_DNA"/>
</dbReference>
<dbReference type="SMR" id="Q35558"/>
<dbReference type="GO" id="GO:0005743">
    <property type="term" value="C:mitochondrial inner membrane"/>
    <property type="evidence" value="ECO:0007669"/>
    <property type="project" value="UniProtKB-SubCell"/>
</dbReference>
<dbReference type="GO" id="GO:0045275">
    <property type="term" value="C:respiratory chain complex III"/>
    <property type="evidence" value="ECO:0007669"/>
    <property type="project" value="InterPro"/>
</dbReference>
<dbReference type="GO" id="GO:0046872">
    <property type="term" value="F:metal ion binding"/>
    <property type="evidence" value="ECO:0007669"/>
    <property type="project" value="UniProtKB-KW"/>
</dbReference>
<dbReference type="GO" id="GO:0008121">
    <property type="term" value="F:ubiquinol-cytochrome-c reductase activity"/>
    <property type="evidence" value="ECO:0007669"/>
    <property type="project" value="InterPro"/>
</dbReference>
<dbReference type="GO" id="GO:0006122">
    <property type="term" value="P:mitochondrial electron transport, ubiquinol to cytochrome c"/>
    <property type="evidence" value="ECO:0007669"/>
    <property type="project" value="TreeGrafter"/>
</dbReference>
<dbReference type="CDD" id="cd00290">
    <property type="entry name" value="cytochrome_b_C"/>
    <property type="match status" value="1"/>
</dbReference>
<dbReference type="CDD" id="cd00284">
    <property type="entry name" value="Cytochrome_b_N"/>
    <property type="match status" value="1"/>
</dbReference>
<dbReference type="FunFam" id="1.20.810.10:FF:000002">
    <property type="entry name" value="Cytochrome b"/>
    <property type="match status" value="1"/>
</dbReference>
<dbReference type="Gene3D" id="1.20.810.10">
    <property type="entry name" value="Cytochrome Bc1 Complex, Chain C"/>
    <property type="match status" value="1"/>
</dbReference>
<dbReference type="InterPro" id="IPR005798">
    <property type="entry name" value="Cyt_b/b6_C"/>
</dbReference>
<dbReference type="InterPro" id="IPR036150">
    <property type="entry name" value="Cyt_b/b6_C_sf"/>
</dbReference>
<dbReference type="InterPro" id="IPR005797">
    <property type="entry name" value="Cyt_b/b6_N"/>
</dbReference>
<dbReference type="InterPro" id="IPR027387">
    <property type="entry name" value="Cytb/b6-like_sf"/>
</dbReference>
<dbReference type="InterPro" id="IPR030689">
    <property type="entry name" value="Cytochrome_b"/>
</dbReference>
<dbReference type="InterPro" id="IPR048260">
    <property type="entry name" value="Cytochrome_b_C_euk/bac"/>
</dbReference>
<dbReference type="InterPro" id="IPR048259">
    <property type="entry name" value="Cytochrome_b_N_euk/bac"/>
</dbReference>
<dbReference type="InterPro" id="IPR016174">
    <property type="entry name" value="Di-haem_cyt_TM"/>
</dbReference>
<dbReference type="PANTHER" id="PTHR19271">
    <property type="entry name" value="CYTOCHROME B"/>
    <property type="match status" value="1"/>
</dbReference>
<dbReference type="PANTHER" id="PTHR19271:SF16">
    <property type="entry name" value="CYTOCHROME B"/>
    <property type="match status" value="1"/>
</dbReference>
<dbReference type="Pfam" id="PF00032">
    <property type="entry name" value="Cytochrom_B_C"/>
    <property type="match status" value="1"/>
</dbReference>
<dbReference type="Pfam" id="PF00033">
    <property type="entry name" value="Cytochrome_B"/>
    <property type="match status" value="1"/>
</dbReference>
<dbReference type="PIRSF" id="PIRSF038885">
    <property type="entry name" value="COB"/>
    <property type="match status" value="1"/>
</dbReference>
<dbReference type="SUPFAM" id="SSF81648">
    <property type="entry name" value="a domain/subunit of cytochrome bc1 complex (Ubiquinol-cytochrome c reductase)"/>
    <property type="match status" value="1"/>
</dbReference>
<dbReference type="SUPFAM" id="SSF81342">
    <property type="entry name" value="Transmembrane di-heme cytochromes"/>
    <property type="match status" value="1"/>
</dbReference>
<dbReference type="PROSITE" id="PS51003">
    <property type="entry name" value="CYTB_CTER"/>
    <property type="match status" value="1"/>
</dbReference>
<dbReference type="PROSITE" id="PS51002">
    <property type="entry name" value="CYTB_NTER"/>
    <property type="match status" value="1"/>
</dbReference>
<keyword id="KW-0249">Electron transport</keyword>
<keyword id="KW-0349">Heme</keyword>
<keyword id="KW-0408">Iron</keyword>
<keyword id="KW-0472">Membrane</keyword>
<keyword id="KW-0479">Metal-binding</keyword>
<keyword id="KW-0496">Mitochondrion</keyword>
<keyword id="KW-0999">Mitochondrion inner membrane</keyword>
<keyword id="KW-0679">Respiratory chain</keyword>
<keyword id="KW-0812">Transmembrane</keyword>
<keyword id="KW-1133">Transmembrane helix</keyword>
<keyword id="KW-0813">Transport</keyword>
<keyword id="KW-0830">Ubiquinone</keyword>
<gene>
    <name type="primary">MT-CYB</name>
    <name type="synonym">COB</name>
    <name type="synonym">CYTB</name>
    <name type="synonym">MTCYB</name>
</gene>
<comment type="function">
    <text evidence="2">Component of the ubiquinol-cytochrome c reductase complex (complex III or cytochrome b-c1 complex) that is part of the mitochondrial respiratory chain. The b-c1 complex mediates electron transfer from ubiquinol to cytochrome c. Contributes to the generation of a proton gradient across the mitochondrial membrane that is then used for ATP synthesis.</text>
</comment>
<comment type="cofactor">
    <cofactor evidence="2">
        <name>heme b</name>
        <dbReference type="ChEBI" id="CHEBI:60344"/>
    </cofactor>
    <text evidence="2">Binds 2 heme b groups non-covalently.</text>
</comment>
<comment type="subunit">
    <text evidence="2">The cytochrome bc1 complex contains 11 subunits: 3 respiratory subunits (MT-CYB, CYC1 and UQCRFS1), 2 core proteins (UQCRC1 and UQCRC2) and 6 low-molecular weight proteins (UQCRH/QCR6, UQCRB/QCR7, UQCRQ/QCR8, UQCR10/QCR9, UQCR11/QCR10 and a cleavage product of UQCRFS1). This cytochrome bc1 complex then forms a dimer.</text>
</comment>
<comment type="subcellular location">
    <subcellularLocation>
        <location evidence="2">Mitochondrion inner membrane</location>
        <topology evidence="2">Multi-pass membrane protein</topology>
    </subcellularLocation>
</comment>
<comment type="miscellaneous">
    <text evidence="1">Heme 1 (or BL or b562) is low-potential and absorbs at about 562 nm, and heme 2 (or BH or b566) is high-potential and absorbs at about 566 nm.</text>
</comment>
<comment type="similarity">
    <text evidence="3 4">Belongs to the cytochrome b family.</text>
</comment>
<comment type="caution">
    <text evidence="2">The full-length protein contains only eight transmembrane helices, not nine as predicted by bioinformatics tools.</text>
</comment>
<evidence type="ECO:0000250" key="1"/>
<evidence type="ECO:0000250" key="2">
    <source>
        <dbReference type="UniProtKB" id="P00157"/>
    </source>
</evidence>
<evidence type="ECO:0000255" key="3">
    <source>
        <dbReference type="PROSITE-ProRule" id="PRU00967"/>
    </source>
</evidence>
<evidence type="ECO:0000255" key="4">
    <source>
        <dbReference type="PROSITE-ProRule" id="PRU00968"/>
    </source>
</evidence>
<geneLocation type="mitochondrion"/>
<protein>
    <recommendedName>
        <fullName>Cytochrome b</fullName>
    </recommendedName>
    <alternativeName>
        <fullName>Complex III subunit 3</fullName>
    </alternativeName>
    <alternativeName>
        <fullName>Complex III subunit III</fullName>
    </alternativeName>
    <alternativeName>
        <fullName>Cytochrome b-c1 complex subunit 3</fullName>
    </alternativeName>
    <alternativeName>
        <fullName>Ubiquinol-cytochrome-c reductase complex cytochrome b subunit</fullName>
    </alternativeName>
</protein>
<proteinExistence type="inferred from homology"/>
<reference key="1">
    <citation type="journal article" date="1996" name="J. Mammal. Evol.">
        <title>Relationships among didelphid marsupials based on sequence variation in the mitochondrial cytochrome b gene.</title>
        <authorList>
            <person name="Patton J.L."/>
            <person name="dos Reis Maria S.F."/>
            <person name="da Silva N.F."/>
        </authorList>
    </citation>
    <scope>NUCLEOTIDE SEQUENCE [GENOMIC DNA]</scope>
</reference>